<keyword id="KW-0028">Amino-acid biosynthesis</keyword>
<keyword id="KW-0223">Dioxygenase</keyword>
<keyword id="KW-0408">Iron</keyword>
<keyword id="KW-0479">Metal-binding</keyword>
<keyword id="KW-0486">Methionine biosynthesis</keyword>
<keyword id="KW-0533">Nickel</keyword>
<keyword id="KW-0560">Oxidoreductase</keyword>
<keyword id="KW-1185">Reference proteome</keyword>
<name>MTND_METCA</name>
<dbReference type="EC" id="1.13.11.54" evidence="1"/>
<dbReference type="EC" id="1.13.11.53" evidence="1"/>
<dbReference type="EMBL" id="AE017282">
    <property type="protein sequence ID" value="AAU92901.1"/>
    <property type="molecule type" value="Genomic_DNA"/>
</dbReference>
<dbReference type="RefSeq" id="WP_010960124.1">
    <property type="nucleotide sequence ID" value="NC_002977.6"/>
</dbReference>
<dbReference type="SMR" id="Q60AP8"/>
<dbReference type="STRING" id="243233.MCA0798"/>
<dbReference type="GeneID" id="88223111"/>
<dbReference type="KEGG" id="mca:MCA0798"/>
<dbReference type="eggNOG" id="COG1791">
    <property type="taxonomic scope" value="Bacteria"/>
</dbReference>
<dbReference type="HOGENOM" id="CLU_125400_0_0_6"/>
<dbReference type="UniPathway" id="UPA00904">
    <property type="reaction ID" value="UER00878"/>
</dbReference>
<dbReference type="Proteomes" id="UP000006821">
    <property type="component" value="Chromosome"/>
</dbReference>
<dbReference type="GO" id="GO:0010308">
    <property type="term" value="F:acireductone dioxygenase (Ni2+-requiring) activity"/>
    <property type="evidence" value="ECO:0007669"/>
    <property type="project" value="UniProtKB-UniRule"/>
</dbReference>
<dbReference type="GO" id="GO:0010309">
    <property type="term" value="F:acireductone dioxygenase [iron(II)-requiring] activity"/>
    <property type="evidence" value="ECO:0007669"/>
    <property type="project" value="UniProtKB-UniRule"/>
</dbReference>
<dbReference type="GO" id="GO:0005506">
    <property type="term" value="F:iron ion binding"/>
    <property type="evidence" value="ECO:0007669"/>
    <property type="project" value="UniProtKB-UniRule"/>
</dbReference>
<dbReference type="GO" id="GO:0016151">
    <property type="term" value="F:nickel cation binding"/>
    <property type="evidence" value="ECO:0007669"/>
    <property type="project" value="UniProtKB-UniRule"/>
</dbReference>
<dbReference type="GO" id="GO:0019509">
    <property type="term" value="P:L-methionine salvage from methylthioadenosine"/>
    <property type="evidence" value="ECO:0007669"/>
    <property type="project" value="UniProtKB-UniRule"/>
</dbReference>
<dbReference type="GO" id="GO:0019284">
    <property type="term" value="P:L-methionine salvage from S-adenosylmethionine"/>
    <property type="evidence" value="ECO:0007669"/>
    <property type="project" value="InterPro"/>
</dbReference>
<dbReference type="CDD" id="cd02232">
    <property type="entry name" value="cupin_ARD"/>
    <property type="match status" value="1"/>
</dbReference>
<dbReference type="Gene3D" id="2.60.120.10">
    <property type="entry name" value="Jelly Rolls"/>
    <property type="match status" value="1"/>
</dbReference>
<dbReference type="HAMAP" id="MF_01682">
    <property type="entry name" value="Salvage_MtnD"/>
    <property type="match status" value="1"/>
</dbReference>
<dbReference type="InterPro" id="IPR004313">
    <property type="entry name" value="ARD"/>
</dbReference>
<dbReference type="InterPro" id="IPR023956">
    <property type="entry name" value="ARD_bac"/>
</dbReference>
<dbReference type="InterPro" id="IPR014710">
    <property type="entry name" value="RmlC-like_jellyroll"/>
</dbReference>
<dbReference type="InterPro" id="IPR011051">
    <property type="entry name" value="RmlC_Cupin_sf"/>
</dbReference>
<dbReference type="PANTHER" id="PTHR23418">
    <property type="entry name" value="ACIREDUCTONE DIOXYGENASE"/>
    <property type="match status" value="1"/>
</dbReference>
<dbReference type="PANTHER" id="PTHR23418:SF0">
    <property type="entry name" value="ACIREDUCTONE DIOXYGENASE"/>
    <property type="match status" value="1"/>
</dbReference>
<dbReference type="Pfam" id="PF03079">
    <property type="entry name" value="ARD"/>
    <property type="match status" value="1"/>
</dbReference>
<dbReference type="SUPFAM" id="SSF51182">
    <property type="entry name" value="RmlC-like cupins"/>
    <property type="match status" value="1"/>
</dbReference>
<organism>
    <name type="scientific">Methylococcus capsulatus (strain ATCC 33009 / NCIMB 11132 / Bath)</name>
    <dbReference type="NCBI Taxonomy" id="243233"/>
    <lineage>
        <taxon>Bacteria</taxon>
        <taxon>Pseudomonadati</taxon>
        <taxon>Pseudomonadota</taxon>
        <taxon>Gammaproteobacteria</taxon>
        <taxon>Methylococcales</taxon>
        <taxon>Methylococcaceae</taxon>
        <taxon>Methylococcus</taxon>
    </lineage>
</organism>
<sequence length="186" mass="21077">MSLLTIHPESGTSAPEIIREGDAIAARLAEIGVLFERWQAGRAFEPDAEQQTILAAYADSVERLKAKYGFESADVISVGPDHPQKDELRARFLREHTHSDFEVRFFVEGRGLFYLHPGDRVYAILCERGDLLSVPSNTRHWFDMGAEPCLKCIRLFTTAEGWVADFTGSDIGDRFPRLEDYLKHYA</sequence>
<comment type="function">
    <text evidence="1">Catalyzes 2 different reactions between oxygen and the acireductone 1,2-dihydroxy-3-keto-5-methylthiopentene (DHK-MTPene) depending upon the metal bound in the active site. Fe-containing acireductone dioxygenase (Fe-ARD) produces formate and 2-keto-4-methylthiobutyrate (KMTB), the alpha-ketoacid precursor of methionine in the methionine recycle pathway. Ni-containing acireductone dioxygenase (Ni-ARD) produces methylthiopropionate, carbon monoxide and formate, and does not lie on the methionine recycle pathway.</text>
</comment>
<comment type="catalytic activity">
    <reaction evidence="1">
        <text>1,2-dihydroxy-5-(methylsulfanyl)pent-1-en-3-one + O2 = 3-(methylsulfanyl)propanoate + CO + formate + 2 H(+)</text>
        <dbReference type="Rhea" id="RHEA:14161"/>
        <dbReference type="ChEBI" id="CHEBI:15378"/>
        <dbReference type="ChEBI" id="CHEBI:15379"/>
        <dbReference type="ChEBI" id="CHEBI:15740"/>
        <dbReference type="ChEBI" id="CHEBI:17245"/>
        <dbReference type="ChEBI" id="CHEBI:49016"/>
        <dbReference type="ChEBI" id="CHEBI:49252"/>
        <dbReference type="EC" id="1.13.11.53"/>
    </reaction>
</comment>
<comment type="catalytic activity">
    <reaction evidence="1">
        <text>1,2-dihydroxy-5-(methylsulfanyl)pent-1-en-3-one + O2 = 4-methylsulfanyl-2-oxobutanoate + formate + 2 H(+)</text>
        <dbReference type="Rhea" id="RHEA:24504"/>
        <dbReference type="ChEBI" id="CHEBI:15378"/>
        <dbReference type="ChEBI" id="CHEBI:15379"/>
        <dbReference type="ChEBI" id="CHEBI:15740"/>
        <dbReference type="ChEBI" id="CHEBI:16723"/>
        <dbReference type="ChEBI" id="CHEBI:49252"/>
        <dbReference type="EC" id="1.13.11.54"/>
    </reaction>
</comment>
<comment type="cofactor">
    <cofactor evidence="1">
        <name>Fe(2+)</name>
        <dbReference type="ChEBI" id="CHEBI:29033"/>
    </cofactor>
    <text evidence="1">Binds 1 Fe(2+) cation per monomer.</text>
</comment>
<comment type="cofactor">
    <cofactor evidence="1">
        <name>Ni(2+)</name>
        <dbReference type="ChEBI" id="CHEBI:49786"/>
    </cofactor>
    <text evidence="1">Binds 1 nickel ion per monomer.</text>
</comment>
<comment type="pathway">
    <text evidence="1">Amino-acid biosynthesis; L-methionine biosynthesis via salvage pathway; L-methionine from S-methyl-5-thio-alpha-D-ribose 1-phosphate: step 5/6.</text>
</comment>
<comment type="subunit">
    <text evidence="1">Monomer.</text>
</comment>
<comment type="similarity">
    <text evidence="1">Belongs to the acireductone dioxygenase (ARD) family.</text>
</comment>
<evidence type="ECO:0000255" key="1">
    <source>
        <dbReference type="HAMAP-Rule" id="MF_01682"/>
    </source>
</evidence>
<gene>
    <name evidence="1" type="primary">mtnD</name>
    <name type="ordered locus">MCA0798</name>
</gene>
<accession>Q60AP8</accession>
<proteinExistence type="inferred from homology"/>
<protein>
    <recommendedName>
        <fullName evidence="1">Acireductone dioxygenase</fullName>
    </recommendedName>
    <alternativeName>
        <fullName evidence="1">1,2-dihydroxy-3-keto-5-methylthiopentene dioxygenase</fullName>
        <shortName evidence="1">DHK-MTPene dioxygenase</shortName>
    </alternativeName>
    <alternativeName>
        <fullName evidence="1">Acireductone dioxygenase (Fe(2+)-requiring)</fullName>
        <shortName evidence="1">ARD'</shortName>
        <shortName evidence="1">Fe-ARD</shortName>
        <ecNumber evidence="1">1.13.11.54</ecNumber>
    </alternativeName>
    <alternativeName>
        <fullName evidence="1">Acireductone dioxygenase (Ni(2+)-requiring)</fullName>
        <shortName evidence="1">ARD</shortName>
        <shortName evidence="1">Ni-ARD</shortName>
        <ecNumber evidence="1">1.13.11.53</ecNumber>
    </alternativeName>
</protein>
<feature type="chain" id="PRO_0000359209" description="Acireductone dioxygenase">
    <location>
        <begin position="1"/>
        <end position="186"/>
    </location>
</feature>
<feature type="binding site" evidence="1">
    <location>
        <position position="96"/>
    </location>
    <ligand>
        <name>Fe(2+)</name>
        <dbReference type="ChEBI" id="CHEBI:29033"/>
    </ligand>
</feature>
<feature type="binding site" evidence="1">
    <location>
        <position position="96"/>
    </location>
    <ligand>
        <name>Ni(2+)</name>
        <dbReference type="ChEBI" id="CHEBI:49786"/>
    </ligand>
</feature>
<feature type="binding site" evidence="1">
    <location>
        <position position="98"/>
    </location>
    <ligand>
        <name>Fe(2+)</name>
        <dbReference type="ChEBI" id="CHEBI:29033"/>
    </ligand>
</feature>
<feature type="binding site" evidence="1">
    <location>
        <position position="98"/>
    </location>
    <ligand>
        <name>Ni(2+)</name>
        <dbReference type="ChEBI" id="CHEBI:49786"/>
    </ligand>
</feature>
<feature type="binding site" evidence="1">
    <location>
        <position position="102"/>
    </location>
    <ligand>
        <name>Fe(2+)</name>
        <dbReference type="ChEBI" id="CHEBI:29033"/>
    </ligand>
</feature>
<feature type="binding site" evidence="1">
    <location>
        <position position="102"/>
    </location>
    <ligand>
        <name>Ni(2+)</name>
        <dbReference type="ChEBI" id="CHEBI:49786"/>
    </ligand>
</feature>
<feature type="binding site" evidence="1">
    <location>
        <position position="140"/>
    </location>
    <ligand>
        <name>Fe(2+)</name>
        <dbReference type="ChEBI" id="CHEBI:29033"/>
    </ligand>
</feature>
<feature type="binding site" evidence="1">
    <location>
        <position position="140"/>
    </location>
    <ligand>
        <name>Ni(2+)</name>
        <dbReference type="ChEBI" id="CHEBI:49786"/>
    </ligand>
</feature>
<feature type="site" description="May play a role in metal incorporation in vivo" evidence="1">
    <location>
        <position position="95"/>
    </location>
</feature>
<feature type="site" description="Important to generate the dianion" evidence="1">
    <location>
        <position position="104"/>
    </location>
</feature>
<reference key="1">
    <citation type="journal article" date="2004" name="PLoS Biol.">
        <title>Genomic insights into methanotrophy: the complete genome sequence of Methylococcus capsulatus (Bath).</title>
        <authorList>
            <person name="Ward N.L."/>
            <person name="Larsen O."/>
            <person name="Sakwa J."/>
            <person name="Bruseth L."/>
            <person name="Khouri H.M."/>
            <person name="Durkin A.S."/>
            <person name="Dimitrov G."/>
            <person name="Jiang L."/>
            <person name="Scanlan D."/>
            <person name="Kang K.H."/>
            <person name="Lewis M.R."/>
            <person name="Nelson K.E."/>
            <person name="Methe B.A."/>
            <person name="Wu M."/>
            <person name="Heidelberg J.F."/>
            <person name="Paulsen I.T."/>
            <person name="Fouts D.E."/>
            <person name="Ravel J."/>
            <person name="Tettelin H."/>
            <person name="Ren Q."/>
            <person name="Read T.D."/>
            <person name="DeBoy R.T."/>
            <person name="Seshadri R."/>
            <person name="Salzberg S.L."/>
            <person name="Jensen H.B."/>
            <person name="Birkeland N.K."/>
            <person name="Nelson W.C."/>
            <person name="Dodson R.J."/>
            <person name="Grindhaug S.H."/>
            <person name="Holt I.E."/>
            <person name="Eidhammer I."/>
            <person name="Jonasen I."/>
            <person name="Vanaken S."/>
            <person name="Utterback T.R."/>
            <person name="Feldblyum T.V."/>
            <person name="Fraser C.M."/>
            <person name="Lillehaug J.R."/>
            <person name="Eisen J.A."/>
        </authorList>
    </citation>
    <scope>NUCLEOTIDE SEQUENCE [LARGE SCALE GENOMIC DNA]</scope>
    <source>
        <strain>ATCC 33009 / NCIMB 11132 / Bath</strain>
    </source>
</reference>